<comment type="function">
    <text evidence="2 3 4">Plays a role in anterograde intraflagellar transport (IFT), the process by which cilia precursors are transported from the base of the cilium to the site of their incorporation at the tip (PubMed:16049494). Specifically required for the kinesin osm-3 to dock onto and move the IFT particles which contain these precursors (PubMed:16049494). Component of the intraflagellar transport (IFT) complex B required for transport of proteins in the motile cilium (PubMed:28479320). May be required for ciliary entrance and transport of specific ciliary cargo proteins such as che-3 which are related to motility (PubMed:28479320). Required for polyglutamylation of axonemal tubulin in sensory cilia (PubMed:17761526).</text>
</comment>
<comment type="subunit">
    <text evidence="4">Component of the IFT complex B composed of at least che-2, che-13, dyf-1, dyf-3, dyf-6, dyf-11, dyf-13, ift-20, ift-74, ift-81, ifta-2, osm-1, osm-5 and osm-6.</text>
</comment>
<comment type="subcellular location">
    <subcellularLocation>
        <location evidence="2">Cell projection</location>
        <location evidence="2">Cilium</location>
    </subcellularLocation>
</comment>
<comment type="alternative products">
    <event type="alternative splicing"/>
    <isoform>
        <id>Q8I7G4-1</id>
        <name>a</name>
        <sequence type="displayed"/>
    </isoform>
    <isoform>
        <id>Q8I7G4-2</id>
        <name>b</name>
        <sequence type="described" ref="VSP_033490"/>
    </isoform>
</comment>
<comment type="tissue specificity">
    <text evidence="1">Expressed in most amphid, both phasmid and several labial-quadrant neurons.</text>
</comment>
<comment type="disruption phenotype">
    <text evidence="2">Sensory neurons are unable to take up a fluorescent dye from the media, a phenotype that is often associated with aberrant sensory cilia.</text>
</comment>
<comment type="similarity">
    <text evidence="5">Belongs to the TTC30/dfy-1/fleer family.</text>
</comment>
<gene>
    <name evidence="6" type="primary">dyf-1</name>
    <name evidence="6" type="ORF">F54C1.5</name>
</gene>
<name>TTC30_CAEEL</name>
<evidence type="ECO:0000269" key="1">
    <source>
    </source>
</evidence>
<evidence type="ECO:0000269" key="2">
    <source>
    </source>
</evidence>
<evidence type="ECO:0000269" key="3">
    <source>
    </source>
</evidence>
<evidence type="ECO:0000269" key="4">
    <source>
    </source>
</evidence>
<evidence type="ECO:0000305" key="5"/>
<evidence type="ECO:0000312" key="6">
    <source>
        <dbReference type="WormBase" id="F54C1.5a"/>
    </source>
</evidence>
<reference key="1">
    <citation type="journal article" date="1998" name="Science">
        <title>Genome sequence of the nematode C. elegans: a platform for investigating biology.</title>
        <authorList>
            <consortium name="The C. elegans sequencing consortium"/>
        </authorList>
    </citation>
    <scope>NUCLEOTIDE SEQUENCE [LARGE SCALE GENOMIC DNA]</scope>
    <scope>ALTERNATIVE SPLICING</scope>
    <source>
        <strain>Bristol N2</strain>
    </source>
</reference>
<reference key="2">
    <citation type="journal article" date="2005" name="Curr. Biol.">
        <title>Functional genomics of the cilium, a sensory organelle.</title>
        <authorList>
            <person name="Blacque O.E."/>
            <person name="Perens E.A."/>
            <person name="Boroevich K.A."/>
            <person name="Inglis P.N."/>
            <person name="Li C."/>
            <person name="Warner A."/>
            <person name="Khattra J."/>
            <person name="Holt R.A."/>
            <person name="Ou G."/>
            <person name="Mah A.K."/>
            <person name="McKay S.J."/>
            <person name="Huang P."/>
            <person name="Swoboda P."/>
            <person name="Jones S.J.M."/>
            <person name="Marra M.A."/>
            <person name="Baillie D.L."/>
            <person name="Moerman D.G."/>
            <person name="Shaham S."/>
            <person name="Leroux M.R."/>
        </authorList>
    </citation>
    <scope>TISSUE SPECIFICITY</scope>
</reference>
<reference key="3">
    <citation type="journal article" date="2005" name="Nature">
        <title>Functional coordination of intraflagellar transport motors.</title>
        <authorList>
            <person name="Ou G."/>
            <person name="Blacque O.E."/>
            <person name="Snow J.J."/>
            <person name="Leroux M.R."/>
            <person name="Scholey J.M."/>
        </authorList>
    </citation>
    <scope>FUNCTION</scope>
    <scope>SUBCELLULAR LOCATION</scope>
    <scope>DISRUPTION PHENOTYPE</scope>
</reference>
<reference key="4">
    <citation type="journal article" date="2007" name="Mol. Biol. Cell">
        <title>The zebrafish fleer gene encodes an essential regulator of cilia tubulin polyglutamylation.</title>
        <authorList>
            <person name="Pathak N.H."/>
            <person name="Obara T."/>
            <person name="Mangos S."/>
            <person name="Liu Y."/>
            <person name="Drummond I.A."/>
        </authorList>
    </citation>
    <scope>FUNCTION</scope>
</reference>
<reference key="5">
    <citation type="journal article" date="2017" name="Curr. Biol.">
        <title>Dynein-driven retrograde intraflagellar transport is triphasic in C. elegans sensory cilia.</title>
        <authorList>
            <person name="Yi P."/>
            <person name="Li W.J."/>
            <person name="Dong M.Q."/>
            <person name="Ou G."/>
        </authorList>
    </citation>
    <scope>FUNCTION</scope>
    <scope>IDENTIFICATION IN IFT COMPLEX B</scope>
    <scope>IDENTIFICATION BY MASS SPECTROMETRY</scope>
</reference>
<dbReference type="EMBL" id="FO080890">
    <property type="protein sequence ID" value="CCD67546.1"/>
    <property type="molecule type" value="Genomic_DNA"/>
</dbReference>
<dbReference type="EMBL" id="FO080890">
    <property type="protein sequence ID" value="CCD67547.1"/>
    <property type="molecule type" value="Genomic_DNA"/>
</dbReference>
<dbReference type="RefSeq" id="NP_491494.2">
    <molecule id="Q8I7G4-1"/>
    <property type="nucleotide sequence ID" value="NM_059093.5"/>
</dbReference>
<dbReference type="RefSeq" id="NP_871863.1">
    <molecule id="Q8I7G4-2"/>
    <property type="nucleotide sequence ID" value="NM_182063.7"/>
</dbReference>
<dbReference type="SMR" id="Q8I7G4"/>
<dbReference type="BioGRID" id="37583">
    <property type="interactions" value="6"/>
</dbReference>
<dbReference type="ComplexPortal" id="CPX-1290">
    <property type="entry name" value="Intraflagellar transport complex B"/>
</dbReference>
<dbReference type="FunCoup" id="Q8I7G4">
    <property type="interactions" value="504"/>
</dbReference>
<dbReference type="STRING" id="6239.F54C1.5a.1"/>
<dbReference type="PaxDb" id="6239-F54C1.5a"/>
<dbReference type="EnsemblMetazoa" id="F54C1.5a.1">
    <molecule id="Q8I7G4-1"/>
    <property type="protein sequence ID" value="F54C1.5a.1"/>
    <property type="gene ID" value="WBGene00001117"/>
</dbReference>
<dbReference type="EnsemblMetazoa" id="F54C1.5b.1">
    <molecule id="Q8I7G4-2"/>
    <property type="protein sequence ID" value="F54C1.5b.1"/>
    <property type="gene ID" value="WBGene00001117"/>
</dbReference>
<dbReference type="EnsemblMetazoa" id="F54C1.5b.2">
    <molecule id="Q8I7G4-2"/>
    <property type="protein sequence ID" value="F54C1.5b.2"/>
    <property type="gene ID" value="WBGene00001117"/>
</dbReference>
<dbReference type="EnsemblMetazoa" id="F54C1.5b.3">
    <molecule id="Q8I7G4-2"/>
    <property type="protein sequence ID" value="F54C1.5b.3"/>
    <property type="gene ID" value="WBGene00001117"/>
</dbReference>
<dbReference type="EnsemblMetazoa" id="F54C1.5b.4">
    <molecule id="Q8I7G4-2"/>
    <property type="protein sequence ID" value="F54C1.5b.4"/>
    <property type="gene ID" value="WBGene00001117"/>
</dbReference>
<dbReference type="GeneID" id="172122"/>
<dbReference type="KEGG" id="cel:CELE_F54C1.5"/>
<dbReference type="UCSC" id="F54C1.5a">
    <molecule id="Q8I7G4-1"/>
    <property type="organism name" value="c. elegans"/>
</dbReference>
<dbReference type="AGR" id="WB:WBGene00001117"/>
<dbReference type="CTD" id="172122"/>
<dbReference type="WormBase" id="F54C1.5a">
    <molecule id="Q8I7G4-1"/>
    <property type="protein sequence ID" value="CE33108"/>
    <property type="gene ID" value="WBGene00001117"/>
    <property type="gene designation" value="dyf-1"/>
</dbReference>
<dbReference type="WormBase" id="F54C1.5b">
    <molecule id="Q8I7G4-2"/>
    <property type="protein sequence ID" value="CE33109"/>
    <property type="gene ID" value="WBGene00001117"/>
    <property type="gene designation" value="dyf-1"/>
</dbReference>
<dbReference type="eggNOG" id="KOG4340">
    <property type="taxonomic scope" value="Eukaryota"/>
</dbReference>
<dbReference type="GeneTree" id="ENSGT00390000010116"/>
<dbReference type="InParanoid" id="Q8I7G4"/>
<dbReference type="OMA" id="CCKHELY"/>
<dbReference type="OrthoDB" id="10249577at2759"/>
<dbReference type="PhylomeDB" id="Q8I7G4"/>
<dbReference type="Reactome" id="R-CEL-5620924">
    <property type="pathway name" value="Intraflagellar transport"/>
</dbReference>
<dbReference type="PRO" id="PR:Q8I7G4"/>
<dbReference type="Proteomes" id="UP000001940">
    <property type="component" value="Chromosome I"/>
</dbReference>
<dbReference type="Bgee" id="WBGene00001117">
    <property type="expression patterns" value="Expressed in pharyngeal muscle cell (C elegans) and 3 other cell types or tissues"/>
</dbReference>
<dbReference type="GO" id="GO:0005879">
    <property type="term" value="C:axonemal microtubule"/>
    <property type="evidence" value="ECO:0000314"/>
    <property type="project" value="UniProtKB"/>
</dbReference>
<dbReference type="GO" id="GO:0036064">
    <property type="term" value="C:ciliary basal body"/>
    <property type="evidence" value="ECO:0000314"/>
    <property type="project" value="MGI"/>
</dbReference>
<dbReference type="GO" id="GO:0005929">
    <property type="term" value="C:cilium"/>
    <property type="evidence" value="ECO:0000314"/>
    <property type="project" value="UniProtKB"/>
</dbReference>
<dbReference type="GO" id="GO:0030992">
    <property type="term" value="C:intraciliary transport particle B"/>
    <property type="evidence" value="ECO:0000318"/>
    <property type="project" value="GO_Central"/>
</dbReference>
<dbReference type="GO" id="GO:0120170">
    <property type="term" value="F:intraciliary transport particle B binding"/>
    <property type="evidence" value="ECO:0000318"/>
    <property type="project" value="GO_Central"/>
</dbReference>
<dbReference type="GO" id="GO:0060271">
    <property type="term" value="P:cilium assembly"/>
    <property type="evidence" value="ECO:0000303"/>
    <property type="project" value="ComplexPortal"/>
</dbReference>
<dbReference type="GO" id="GO:0042073">
    <property type="term" value="P:intraciliary transport"/>
    <property type="evidence" value="ECO:0000315"/>
    <property type="project" value="UniProtKB"/>
</dbReference>
<dbReference type="GO" id="GO:0072659">
    <property type="term" value="P:protein localization to plasma membrane"/>
    <property type="evidence" value="ECO:0000315"/>
    <property type="project" value="UniProtKB"/>
</dbReference>
<dbReference type="GO" id="GO:0018095">
    <property type="term" value="P:protein polyglutamylation"/>
    <property type="evidence" value="ECO:0000315"/>
    <property type="project" value="UniProtKB"/>
</dbReference>
<dbReference type="FunFam" id="1.25.40.10:FF:000186">
    <property type="entry name" value="Tetratricopeptide repeat domain 30A"/>
    <property type="match status" value="1"/>
</dbReference>
<dbReference type="FunFam" id="1.25.40.10:FF:001267">
    <property type="entry name" value="Tetratricopeptide repeat protein 30 homolog"/>
    <property type="match status" value="1"/>
</dbReference>
<dbReference type="Gene3D" id="1.25.40.10">
    <property type="entry name" value="Tetratricopeptide repeat domain"/>
    <property type="match status" value="3"/>
</dbReference>
<dbReference type="InterPro" id="IPR011990">
    <property type="entry name" value="TPR-like_helical_dom_sf"/>
</dbReference>
<dbReference type="InterPro" id="IPR019734">
    <property type="entry name" value="TPR_rpt"/>
</dbReference>
<dbReference type="InterPro" id="IPR039941">
    <property type="entry name" value="TT30"/>
</dbReference>
<dbReference type="PANTHER" id="PTHR20931">
    <property type="entry name" value="TETRATRICOPEPTIDE REPEAT PROTEIN 30"/>
    <property type="match status" value="1"/>
</dbReference>
<dbReference type="PANTHER" id="PTHR20931:SF0">
    <property type="entry name" value="TETRATRICOPEPTIDE REPEAT PROTEIN 30"/>
    <property type="match status" value="1"/>
</dbReference>
<dbReference type="Pfam" id="PF13432">
    <property type="entry name" value="TPR_16"/>
    <property type="match status" value="1"/>
</dbReference>
<dbReference type="Pfam" id="PF14559">
    <property type="entry name" value="TPR_19"/>
    <property type="match status" value="1"/>
</dbReference>
<dbReference type="SMART" id="SM00028">
    <property type="entry name" value="TPR"/>
    <property type="match status" value="3"/>
</dbReference>
<dbReference type="SUPFAM" id="SSF48452">
    <property type="entry name" value="TPR-like"/>
    <property type="match status" value="2"/>
</dbReference>
<dbReference type="PROSITE" id="PS50293">
    <property type="entry name" value="TPR_REGION"/>
    <property type="match status" value="1"/>
</dbReference>
<proteinExistence type="evidence at protein level"/>
<accession>Q8I7G4</accession>
<accession>Q8I7G3</accession>
<protein>
    <recommendedName>
        <fullName>Tetratricopeptide repeat protein 30 homolog</fullName>
        <shortName>TPR repeat protein 30 homolog</shortName>
    </recommendedName>
    <alternativeName>
        <fullName>Abnormal dye filling protein 1</fullName>
    </alternativeName>
</protein>
<feature type="chain" id="PRO_0000333210" description="Tetratricopeptide repeat protein 30 homolog">
    <location>
        <begin position="1"/>
        <end position="656"/>
    </location>
</feature>
<feature type="repeat" description="TPR 1">
    <location>
        <begin position="9"/>
        <end position="42"/>
    </location>
</feature>
<feature type="repeat" description="TPR 2">
    <location>
        <begin position="43"/>
        <end position="76"/>
    </location>
</feature>
<feature type="repeat" description="TPR 3">
    <location>
        <begin position="141"/>
        <end position="174"/>
    </location>
</feature>
<feature type="repeat" description="TPR 4">
    <location>
        <begin position="176"/>
        <end position="208"/>
    </location>
</feature>
<feature type="repeat" description="TPR 5">
    <location>
        <begin position="238"/>
        <end position="271"/>
    </location>
</feature>
<feature type="repeat" description="TPR 6">
    <location>
        <begin position="378"/>
        <end position="412"/>
    </location>
</feature>
<feature type="repeat" description="TPR 7">
    <location>
        <begin position="416"/>
        <end position="449"/>
    </location>
</feature>
<feature type="repeat" description="TPR 8">
    <location>
        <begin position="451"/>
        <end position="484"/>
    </location>
</feature>
<feature type="repeat" description="TPR 9">
    <location>
        <begin position="537"/>
        <end position="570"/>
    </location>
</feature>
<feature type="splice variant" id="VSP_033490" description="In isoform b." evidence="5">
    <location>
        <begin position="1"/>
        <end position="59"/>
    </location>
</feature>
<keyword id="KW-0025">Alternative splicing</keyword>
<keyword id="KW-0966">Cell projection</keyword>
<keyword id="KW-0969">Cilium</keyword>
<keyword id="KW-0970">Cilium biogenesis/degradation</keyword>
<keyword id="KW-1185">Reference proteome</keyword>
<keyword id="KW-0677">Repeat</keyword>
<keyword id="KW-0802">TPR repeat</keyword>
<organism>
    <name type="scientific">Caenorhabditis elegans</name>
    <dbReference type="NCBI Taxonomy" id="6239"/>
    <lineage>
        <taxon>Eukaryota</taxon>
        <taxon>Metazoa</taxon>
        <taxon>Ecdysozoa</taxon>
        <taxon>Nematoda</taxon>
        <taxon>Chromadorea</taxon>
        <taxon>Rhabditida</taxon>
        <taxon>Rhabditina</taxon>
        <taxon>Rhabditomorpha</taxon>
        <taxon>Rhabditoidea</taxon>
        <taxon>Rhabditidae</taxon>
        <taxon>Peloderinae</taxon>
        <taxon>Caenorhabditis</taxon>
    </lineage>
</organism>
<sequence length="656" mass="75607">MNAMLNIKEGEFTSTIYTLIHEHKFNDAIRILQYQHERNPKNLAALSLLAYCYYYTQDFMNAADCYSQLSYNFPQYSQYKLYHAQSLYNAFRPADALAVVSMIQDENLLNESVKLEAAIKYQEDDLVNCRILVEQLPENDAAVIINTACIDYKEGNYEEALKKFNEATEFSGYQSGLAYSIALCHYRRGDYDSALKLISEIINRGVKDHPEFNIGMVTEGIDVNFIQNTQKLHESALIEAFNLKFAIYYRTKDFKAAKESLTDMPPRNEHDADPITLHNLAISNANSDFGDSSAKLQFLLGINPFPQETFANLLFLYCKNDYFGLAADVLAENPSHTFYCLNEYQFNLLEALIYMPTNPEESLKKLEKLEKECLDRLRKTAIEIQIKKEQKTTDSDDSLEMRNLIESYDDSLEMYLPVLMTYAKYYWDKRDYQAVEKLFRNSVDYCKEHDTWKLNVAHTIFMQEKKYKDAAAFYEPIVHKKYDDGILEVPAMILANLVVCYIMTNQTDEAELILKAVENEEEAALMMKPNEKFFHNSIISLVIGSLYCSKGNFEFGISRVVKALEPPEKKLGVDTWYYAKRCIVAAIELMAKNLLVMRDSVVMEVIQFLTSCEVPGRNIYTVPDDLFEQAGESKVKCNVTYEARMIKAALLMVFND</sequence>